<name>RBL_EXAAF</name>
<evidence type="ECO:0000255" key="1">
    <source>
        <dbReference type="HAMAP-Rule" id="MF_01338"/>
    </source>
</evidence>
<accession>Q05989</accession>
<sequence length="446" mass="49123">DILAAFRVTPQPGVPPEEAGAAVAAESSTGTWTTVWTDGLTSLDRYKGRCYGIEPVPGEEDQYIAYVAYPLDLFEEGSVTNMFTSIVGNVFGFKALRALRLEDLRIPPAYIKTFQGPPHGIQVERDKLNKYGRPLLGCTIKPKLGLSAKNYGRAVYECLRGGLDFTKDDENVNSQPFMRWRDRFLFCAEAINKAQAETGEIKGHYLNATAGTCEEMIKRAVFARGLGVPIVMHDYLTGGFTANTSLAHYCRDNGLLLHIHRAMHAVIDRQKNHGIHFRVLRKALRMSGGDHIHSGTVVGKLEGERDITLGFVDLLRDDFIEKDRSXGIYFTQDWVSLPGVIPVASGGIHVWHMPALTEIFGGDSVLQFGGGTLGHPWGNAPGAVANRVALEACVQARNEGRDLAVEGNEIIREASKWSPELAAACEVWKEIRFNFKAVDTLDPLKS</sequence>
<geneLocation type="chloroplast"/>
<reference key="1">
    <citation type="journal article" date="1992" name="Ann. Mo. Bot. Gard.">
        <title>Monophyly of the Asteridae and identification of their major lineages inferred from DNA sequences of rbcL.</title>
        <authorList>
            <person name="Olmstead R.G."/>
            <person name="Michaels H.J."/>
            <person name="Scott K.M."/>
            <person name="Palmer J.D."/>
        </authorList>
        <dbReference type="AGRICOLA" id="IND93014998"/>
    </citation>
    <scope>NUCLEOTIDE SEQUENCE [GENOMIC DNA]</scope>
</reference>
<keyword id="KW-0113">Calvin cycle</keyword>
<keyword id="KW-0120">Carbon dioxide fixation</keyword>
<keyword id="KW-0150">Chloroplast</keyword>
<keyword id="KW-1015">Disulfide bond</keyword>
<keyword id="KW-0456">Lyase</keyword>
<keyword id="KW-0460">Magnesium</keyword>
<keyword id="KW-0479">Metal-binding</keyword>
<keyword id="KW-0503">Monooxygenase</keyword>
<keyword id="KW-0560">Oxidoreductase</keyword>
<keyword id="KW-0601">Photorespiration</keyword>
<keyword id="KW-0602">Photosynthesis</keyword>
<keyword id="KW-0934">Plastid</keyword>
<feature type="chain" id="PRO_0000062473" description="Ribulose bisphosphate carboxylase large chain">
    <location>
        <begin position="1" status="less than"/>
        <end position="446"/>
    </location>
</feature>
<feature type="active site" description="Proton acceptor" evidence="1">
    <location>
        <position position="141"/>
    </location>
</feature>
<feature type="active site" description="Proton acceptor" evidence="1">
    <location>
        <position position="260"/>
    </location>
</feature>
<feature type="binding site" description="in homodimeric partner" evidence="1">
    <location>
        <position position="89"/>
    </location>
    <ligand>
        <name>substrate</name>
    </ligand>
</feature>
<feature type="binding site" evidence="1">
    <location>
        <position position="139"/>
    </location>
    <ligand>
        <name>substrate</name>
    </ligand>
</feature>
<feature type="binding site" evidence="1">
    <location>
        <position position="143"/>
    </location>
    <ligand>
        <name>substrate</name>
    </ligand>
</feature>
<feature type="binding site" description="via carbamate group" evidence="1">
    <location>
        <position position="167"/>
    </location>
    <ligand>
        <name>Mg(2+)</name>
        <dbReference type="ChEBI" id="CHEBI:18420"/>
    </ligand>
</feature>
<feature type="binding site" evidence="1">
    <location>
        <position position="169"/>
    </location>
    <ligand>
        <name>Mg(2+)</name>
        <dbReference type="ChEBI" id="CHEBI:18420"/>
    </ligand>
</feature>
<feature type="binding site" evidence="1">
    <location>
        <position position="170"/>
    </location>
    <ligand>
        <name>Mg(2+)</name>
        <dbReference type="ChEBI" id="CHEBI:18420"/>
    </ligand>
</feature>
<feature type="binding site" evidence="1">
    <location>
        <position position="261"/>
    </location>
    <ligand>
        <name>substrate</name>
    </ligand>
</feature>
<feature type="binding site" evidence="1">
    <location>
        <position position="293"/>
    </location>
    <ligand>
        <name>substrate</name>
    </ligand>
</feature>
<feature type="binding site" evidence="1">
    <location>
        <position position="345"/>
    </location>
    <ligand>
        <name>substrate</name>
    </ligand>
</feature>
<feature type="site" description="Transition state stabilizer" evidence="1">
    <location>
        <position position="300"/>
    </location>
</feature>
<feature type="modified residue" description="N6-carboxylysine" evidence="1">
    <location>
        <position position="167"/>
    </location>
</feature>
<feature type="disulfide bond" description="Interchain; in linked form" evidence="1">
    <location>
        <position position="213"/>
    </location>
</feature>
<feature type="non-terminal residue">
    <location>
        <position position="1"/>
    </location>
</feature>
<organism>
    <name type="scientific">Exacum affine</name>
    <name type="common">Persian violet</name>
    <dbReference type="NCBI Taxonomy" id="13525"/>
    <lineage>
        <taxon>Eukaryota</taxon>
        <taxon>Viridiplantae</taxon>
        <taxon>Streptophyta</taxon>
        <taxon>Embryophyta</taxon>
        <taxon>Tracheophyta</taxon>
        <taxon>Spermatophyta</taxon>
        <taxon>Magnoliopsida</taxon>
        <taxon>eudicotyledons</taxon>
        <taxon>Gunneridae</taxon>
        <taxon>Pentapetalae</taxon>
        <taxon>asterids</taxon>
        <taxon>lamiids</taxon>
        <taxon>Gentianales</taxon>
        <taxon>Gentianaceae</taxon>
        <taxon>Exaceae</taxon>
        <taxon>Exacum</taxon>
    </lineage>
</organism>
<comment type="function">
    <text evidence="1">RuBisCO catalyzes two reactions: the carboxylation of D-ribulose 1,5-bisphosphate, the primary event in carbon dioxide fixation, as well as the oxidative fragmentation of the pentose substrate in the photorespiration process. Both reactions occur simultaneously and in competition at the same active site.</text>
</comment>
<comment type="catalytic activity">
    <reaction evidence="1">
        <text>2 (2R)-3-phosphoglycerate + 2 H(+) = D-ribulose 1,5-bisphosphate + CO2 + H2O</text>
        <dbReference type="Rhea" id="RHEA:23124"/>
        <dbReference type="ChEBI" id="CHEBI:15377"/>
        <dbReference type="ChEBI" id="CHEBI:15378"/>
        <dbReference type="ChEBI" id="CHEBI:16526"/>
        <dbReference type="ChEBI" id="CHEBI:57870"/>
        <dbReference type="ChEBI" id="CHEBI:58272"/>
        <dbReference type="EC" id="4.1.1.39"/>
    </reaction>
</comment>
<comment type="catalytic activity">
    <reaction evidence="1">
        <text>D-ribulose 1,5-bisphosphate + O2 = 2-phosphoglycolate + (2R)-3-phosphoglycerate + 2 H(+)</text>
        <dbReference type="Rhea" id="RHEA:36631"/>
        <dbReference type="ChEBI" id="CHEBI:15378"/>
        <dbReference type="ChEBI" id="CHEBI:15379"/>
        <dbReference type="ChEBI" id="CHEBI:57870"/>
        <dbReference type="ChEBI" id="CHEBI:58033"/>
        <dbReference type="ChEBI" id="CHEBI:58272"/>
    </reaction>
</comment>
<comment type="cofactor">
    <cofactor evidence="1">
        <name>Mg(2+)</name>
        <dbReference type="ChEBI" id="CHEBI:18420"/>
    </cofactor>
    <text evidence="1">Binds 1 Mg(2+) ion per subunit.</text>
</comment>
<comment type="subunit">
    <text evidence="1">Heterohexadecamer of 8 large chains and 8 small chains; disulfide-linked. The disulfide link is formed within the large subunit homodimers.</text>
</comment>
<comment type="subcellular location">
    <subcellularLocation>
        <location>Plastid</location>
        <location>Chloroplast</location>
    </subcellularLocation>
</comment>
<comment type="PTM">
    <text evidence="1">The disulfide bond which can form in the large chain dimeric partners within the hexadecamer appears to be associated with oxidative stress and protein turnover.</text>
</comment>
<comment type="miscellaneous">
    <text evidence="1">The basic functional RuBisCO is composed of a large chain homodimer in a 'head-to-tail' conformation. In form I RuBisCO this homodimer is arranged in a barrel-like tetramer with the small subunits forming a tetrameric 'cap' on each end of the 'barrel'.</text>
</comment>
<comment type="similarity">
    <text evidence="1">Belongs to the RuBisCO large chain family. Type I subfamily.</text>
</comment>
<gene>
    <name evidence="1" type="primary">rbcL</name>
</gene>
<proteinExistence type="inferred from homology"/>
<dbReference type="EC" id="4.1.1.39" evidence="1"/>
<dbReference type="EMBL" id="L11684">
    <property type="protein sequence ID" value="AAA84251.1"/>
    <property type="molecule type" value="Genomic_DNA"/>
</dbReference>
<dbReference type="GO" id="GO:0009507">
    <property type="term" value="C:chloroplast"/>
    <property type="evidence" value="ECO:0007669"/>
    <property type="project" value="UniProtKB-SubCell"/>
</dbReference>
<dbReference type="GO" id="GO:0000287">
    <property type="term" value="F:magnesium ion binding"/>
    <property type="evidence" value="ECO:0007669"/>
    <property type="project" value="InterPro"/>
</dbReference>
<dbReference type="GO" id="GO:0004497">
    <property type="term" value="F:monooxygenase activity"/>
    <property type="evidence" value="ECO:0007669"/>
    <property type="project" value="UniProtKB-KW"/>
</dbReference>
<dbReference type="GO" id="GO:0016984">
    <property type="term" value="F:ribulose-bisphosphate carboxylase activity"/>
    <property type="evidence" value="ECO:0007669"/>
    <property type="project" value="UniProtKB-EC"/>
</dbReference>
<dbReference type="GO" id="GO:0009853">
    <property type="term" value="P:photorespiration"/>
    <property type="evidence" value="ECO:0007669"/>
    <property type="project" value="UniProtKB-KW"/>
</dbReference>
<dbReference type="GO" id="GO:0019253">
    <property type="term" value="P:reductive pentose-phosphate cycle"/>
    <property type="evidence" value="ECO:0007669"/>
    <property type="project" value="UniProtKB-KW"/>
</dbReference>
<dbReference type="CDD" id="cd08212">
    <property type="entry name" value="RuBisCO_large_I"/>
    <property type="match status" value="1"/>
</dbReference>
<dbReference type="FunFam" id="3.20.20.110:FF:000001">
    <property type="entry name" value="Ribulose bisphosphate carboxylase large chain"/>
    <property type="match status" value="1"/>
</dbReference>
<dbReference type="Gene3D" id="3.20.20.110">
    <property type="entry name" value="Ribulose bisphosphate carboxylase, large subunit, C-terminal domain"/>
    <property type="match status" value="1"/>
</dbReference>
<dbReference type="Gene3D" id="3.30.70.150">
    <property type="entry name" value="RuBisCO large subunit, N-terminal domain"/>
    <property type="match status" value="1"/>
</dbReference>
<dbReference type="HAMAP" id="MF_01338">
    <property type="entry name" value="RuBisCO_L_type1"/>
    <property type="match status" value="1"/>
</dbReference>
<dbReference type="InterPro" id="IPR033966">
    <property type="entry name" value="RuBisCO"/>
</dbReference>
<dbReference type="InterPro" id="IPR020878">
    <property type="entry name" value="RuBisCo_large_chain_AS"/>
</dbReference>
<dbReference type="InterPro" id="IPR000685">
    <property type="entry name" value="RuBisCO_lsu_C"/>
</dbReference>
<dbReference type="InterPro" id="IPR036376">
    <property type="entry name" value="RuBisCO_lsu_C_sf"/>
</dbReference>
<dbReference type="InterPro" id="IPR017443">
    <property type="entry name" value="RuBisCO_lsu_fd_N"/>
</dbReference>
<dbReference type="InterPro" id="IPR036422">
    <property type="entry name" value="RuBisCO_lsu_N_sf"/>
</dbReference>
<dbReference type="InterPro" id="IPR020888">
    <property type="entry name" value="RuBisCO_lsuI"/>
</dbReference>
<dbReference type="NCBIfam" id="NF003252">
    <property type="entry name" value="PRK04208.1"/>
    <property type="match status" value="1"/>
</dbReference>
<dbReference type="PANTHER" id="PTHR42704">
    <property type="entry name" value="RIBULOSE BISPHOSPHATE CARBOXYLASE"/>
    <property type="match status" value="1"/>
</dbReference>
<dbReference type="PANTHER" id="PTHR42704:SF15">
    <property type="entry name" value="RIBULOSE BISPHOSPHATE CARBOXYLASE LARGE CHAIN"/>
    <property type="match status" value="1"/>
</dbReference>
<dbReference type="Pfam" id="PF00016">
    <property type="entry name" value="RuBisCO_large"/>
    <property type="match status" value="1"/>
</dbReference>
<dbReference type="Pfam" id="PF02788">
    <property type="entry name" value="RuBisCO_large_N"/>
    <property type="match status" value="1"/>
</dbReference>
<dbReference type="SFLD" id="SFLDG01052">
    <property type="entry name" value="RuBisCO"/>
    <property type="match status" value="1"/>
</dbReference>
<dbReference type="SFLD" id="SFLDS00014">
    <property type="entry name" value="RuBisCO"/>
    <property type="match status" value="1"/>
</dbReference>
<dbReference type="SFLD" id="SFLDG00301">
    <property type="entry name" value="RuBisCO-like_proteins"/>
    <property type="match status" value="1"/>
</dbReference>
<dbReference type="SUPFAM" id="SSF51649">
    <property type="entry name" value="RuBisCo, C-terminal domain"/>
    <property type="match status" value="1"/>
</dbReference>
<dbReference type="SUPFAM" id="SSF54966">
    <property type="entry name" value="RuBisCO, large subunit, small (N-terminal) domain"/>
    <property type="match status" value="1"/>
</dbReference>
<dbReference type="PROSITE" id="PS00157">
    <property type="entry name" value="RUBISCO_LARGE"/>
    <property type="match status" value="1"/>
</dbReference>
<protein>
    <recommendedName>
        <fullName evidence="1">Ribulose bisphosphate carboxylase large chain</fullName>
        <shortName evidence="1">RuBisCO large subunit</shortName>
        <ecNumber evidence="1">4.1.1.39</ecNumber>
    </recommendedName>
</protein>